<keyword id="KW-0256">Endoplasmic reticulum</keyword>
<keyword id="KW-0274">FAD</keyword>
<keyword id="KW-0285">Flavoprotein</keyword>
<keyword id="KW-0349">Heme</keyword>
<keyword id="KW-0408">Iron</keyword>
<keyword id="KW-0479">Metal-binding</keyword>
<keyword id="KW-0520">NAD</keyword>
<keyword id="KW-0560">Oxidoreductase</keyword>
<keyword id="KW-1185">Reference proteome</keyword>
<name>NB5R4_DANRE</name>
<dbReference type="EC" id="1.6.2.2"/>
<dbReference type="EMBL" id="BC095683">
    <property type="protein sequence ID" value="AAH95683.1"/>
    <property type="molecule type" value="mRNA"/>
</dbReference>
<dbReference type="RefSeq" id="NP_001018496.1">
    <property type="nucleotide sequence ID" value="NM_001020660.1"/>
</dbReference>
<dbReference type="SMR" id="Q502I6"/>
<dbReference type="FunCoup" id="Q502I6">
    <property type="interactions" value="1301"/>
</dbReference>
<dbReference type="STRING" id="7955.ENSDARP00000003991"/>
<dbReference type="PaxDb" id="7955-ENSDARP00000003991"/>
<dbReference type="GeneID" id="553685"/>
<dbReference type="KEGG" id="dre:553685"/>
<dbReference type="AGR" id="ZFIN:ZDB-GENE-050522-225"/>
<dbReference type="CTD" id="51167"/>
<dbReference type="ZFIN" id="ZDB-GENE-050522-225">
    <property type="gene designation" value="cyb5r4"/>
</dbReference>
<dbReference type="eggNOG" id="KOG0534">
    <property type="taxonomic scope" value="Eukaryota"/>
</dbReference>
<dbReference type="eggNOG" id="KOG0536">
    <property type="taxonomic scope" value="Eukaryota"/>
</dbReference>
<dbReference type="InParanoid" id="Q502I6"/>
<dbReference type="OrthoDB" id="432299at2759"/>
<dbReference type="PhylomeDB" id="Q502I6"/>
<dbReference type="Reactome" id="R-DRE-1237044">
    <property type="pathway name" value="Erythrocytes take up carbon dioxide and release oxygen"/>
</dbReference>
<dbReference type="PRO" id="PR:Q502I6"/>
<dbReference type="Proteomes" id="UP000000437">
    <property type="component" value="Chromosome 16"/>
</dbReference>
<dbReference type="GO" id="GO:0005737">
    <property type="term" value="C:cytoplasm"/>
    <property type="evidence" value="ECO:0000318"/>
    <property type="project" value="GO_Central"/>
</dbReference>
<dbReference type="GO" id="GO:0005783">
    <property type="term" value="C:endoplasmic reticulum"/>
    <property type="evidence" value="ECO:0000318"/>
    <property type="project" value="GO_Central"/>
</dbReference>
<dbReference type="GO" id="GO:0004128">
    <property type="term" value="F:cytochrome-b5 reductase activity, acting on NAD(P)H"/>
    <property type="evidence" value="ECO:0000318"/>
    <property type="project" value="GO_Central"/>
</dbReference>
<dbReference type="GO" id="GO:0020037">
    <property type="term" value="F:heme binding"/>
    <property type="evidence" value="ECO:0000318"/>
    <property type="project" value="GO_Central"/>
</dbReference>
<dbReference type="GO" id="GO:0046872">
    <property type="term" value="F:metal ion binding"/>
    <property type="evidence" value="ECO:0007669"/>
    <property type="project" value="UniProtKB-KW"/>
</dbReference>
<dbReference type="GO" id="GO:0006801">
    <property type="term" value="P:superoxide metabolic process"/>
    <property type="evidence" value="ECO:0000318"/>
    <property type="project" value="GO_Central"/>
</dbReference>
<dbReference type="CDD" id="cd06183">
    <property type="entry name" value="cyt_b5_reduct_like"/>
    <property type="match status" value="1"/>
</dbReference>
<dbReference type="CDD" id="cd06490">
    <property type="entry name" value="p23_NCB5OR"/>
    <property type="match status" value="1"/>
</dbReference>
<dbReference type="FunFam" id="2.40.30.10:FF:000063">
    <property type="entry name" value="Cytochrome b5 reductase 4"/>
    <property type="match status" value="1"/>
</dbReference>
<dbReference type="FunFam" id="3.10.120.10:FF:000001">
    <property type="entry name" value="Cytochrome b5 reductase 4"/>
    <property type="match status" value="1"/>
</dbReference>
<dbReference type="FunFam" id="3.40.50.80:FF:000021">
    <property type="entry name" value="Cytochrome b5 reductase 4"/>
    <property type="match status" value="1"/>
</dbReference>
<dbReference type="FunFam" id="2.60.40.790:FF:000019">
    <property type="entry name" value="cytochrome b5 reductase 4 isoform X1"/>
    <property type="match status" value="1"/>
</dbReference>
<dbReference type="Gene3D" id="2.60.40.790">
    <property type="match status" value="1"/>
</dbReference>
<dbReference type="Gene3D" id="3.10.120.10">
    <property type="entry name" value="Cytochrome b5-like heme/steroid binding domain"/>
    <property type="match status" value="1"/>
</dbReference>
<dbReference type="Gene3D" id="3.40.50.80">
    <property type="entry name" value="Nucleotide-binding domain of ferredoxin-NADP reductase (FNR) module"/>
    <property type="match status" value="1"/>
</dbReference>
<dbReference type="Gene3D" id="2.40.30.10">
    <property type="entry name" value="Translation factors"/>
    <property type="match status" value="1"/>
</dbReference>
<dbReference type="InterPro" id="IPR008333">
    <property type="entry name" value="Cbr1-like_FAD-bd_dom"/>
</dbReference>
<dbReference type="InterPro" id="IPR007052">
    <property type="entry name" value="CS_dom"/>
</dbReference>
<dbReference type="InterPro" id="IPR001199">
    <property type="entry name" value="Cyt_B5-like_heme/steroid-bd"/>
</dbReference>
<dbReference type="InterPro" id="IPR036400">
    <property type="entry name" value="Cyt_B5-like_heme/steroid_sf"/>
</dbReference>
<dbReference type="InterPro" id="IPR018506">
    <property type="entry name" value="Cyt_B5_heme-BS"/>
</dbReference>
<dbReference type="InterPro" id="IPR051872">
    <property type="entry name" value="Cytochrome_b5/Flavoprotein_Rdt"/>
</dbReference>
<dbReference type="InterPro" id="IPR017927">
    <property type="entry name" value="FAD-bd_FR_type"/>
</dbReference>
<dbReference type="InterPro" id="IPR039261">
    <property type="entry name" value="FNR_nucleotide-bd"/>
</dbReference>
<dbReference type="InterPro" id="IPR008978">
    <property type="entry name" value="HSP20-like_chaperone"/>
</dbReference>
<dbReference type="InterPro" id="IPR001433">
    <property type="entry name" value="OxRdtase_FAD/NAD-bd"/>
</dbReference>
<dbReference type="InterPro" id="IPR037908">
    <property type="entry name" value="p23_NCB5OR"/>
</dbReference>
<dbReference type="InterPro" id="IPR017938">
    <property type="entry name" value="Riboflavin_synthase-like_b-brl"/>
</dbReference>
<dbReference type="PANTHER" id="PTHR46237:SF1">
    <property type="entry name" value="CYTOCHROME B5 REDUCTASE 4"/>
    <property type="match status" value="1"/>
</dbReference>
<dbReference type="PANTHER" id="PTHR46237">
    <property type="entry name" value="CYTOCHROME B5 REDUCTASE 4 FAMILY MEMBER"/>
    <property type="match status" value="1"/>
</dbReference>
<dbReference type="Pfam" id="PF00173">
    <property type="entry name" value="Cyt-b5"/>
    <property type="match status" value="1"/>
</dbReference>
<dbReference type="Pfam" id="PF00970">
    <property type="entry name" value="FAD_binding_6"/>
    <property type="match status" value="1"/>
</dbReference>
<dbReference type="Pfam" id="PF00175">
    <property type="entry name" value="NAD_binding_1"/>
    <property type="match status" value="1"/>
</dbReference>
<dbReference type="PRINTS" id="PR00406">
    <property type="entry name" value="CYTB5RDTASE"/>
</dbReference>
<dbReference type="PRINTS" id="PR00363">
    <property type="entry name" value="CYTOCHROMEB5"/>
</dbReference>
<dbReference type="SMART" id="SM01117">
    <property type="entry name" value="Cyt-b5"/>
    <property type="match status" value="1"/>
</dbReference>
<dbReference type="SUPFAM" id="SSF55856">
    <property type="entry name" value="Cytochrome b5-like heme/steroid binding domain"/>
    <property type="match status" value="1"/>
</dbReference>
<dbReference type="SUPFAM" id="SSF52343">
    <property type="entry name" value="Ferredoxin reductase-like, C-terminal NADP-linked domain"/>
    <property type="match status" value="1"/>
</dbReference>
<dbReference type="SUPFAM" id="SSF49764">
    <property type="entry name" value="HSP20-like chaperones"/>
    <property type="match status" value="1"/>
</dbReference>
<dbReference type="SUPFAM" id="SSF63380">
    <property type="entry name" value="Riboflavin synthase domain-like"/>
    <property type="match status" value="1"/>
</dbReference>
<dbReference type="PROSITE" id="PS51203">
    <property type="entry name" value="CS"/>
    <property type="match status" value="1"/>
</dbReference>
<dbReference type="PROSITE" id="PS00191">
    <property type="entry name" value="CYTOCHROME_B5_1"/>
    <property type="match status" value="1"/>
</dbReference>
<dbReference type="PROSITE" id="PS50255">
    <property type="entry name" value="CYTOCHROME_B5_2"/>
    <property type="match status" value="1"/>
</dbReference>
<dbReference type="PROSITE" id="PS51384">
    <property type="entry name" value="FAD_FR"/>
    <property type="match status" value="1"/>
</dbReference>
<comment type="function">
    <text evidence="1">NADH-cytochrome b5 reductase involved in endoplasmic reticulum stress response pathway.</text>
</comment>
<comment type="catalytic activity">
    <reaction>
        <text>2 Fe(III)-[cytochrome b5] + NADH = 2 Fe(II)-[cytochrome b5] + NAD(+) + H(+)</text>
        <dbReference type="Rhea" id="RHEA:46680"/>
        <dbReference type="Rhea" id="RHEA-COMP:10438"/>
        <dbReference type="Rhea" id="RHEA-COMP:10439"/>
        <dbReference type="ChEBI" id="CHEBI:15378"/>
        <dbReference type="ChEBI" id="CHEBI:29033"/>
        <dbReference type="ChEBI" id="CHEBI:29034"/>
        <dbReference type="ChEBI" id="CHEBI:57540"/>
        <dbReference type="ChEBI" id="CHEBI:57945"/>
        <dbReference type="EC" id="1.6.2.2"/>
    </reaction>
</comment>
<comment type="cofactor">
    <cofactor evidence="1">
        <name>FAD</name>
        <dbReference type="ChEBI" id="CHEBI:57692"/>
    </cofactor>
</comment>
<comment type="subcellular location">
    <subcellularLocation>
        <location>Endoplasmic reticulum</location>
    </subcellularLocation>
    <text evidence="1">Soluble protein.</text>
</comment>
<comment type="similarity">
    <text evidence="6">Belongs to the flavoprotein pyridine nucleotide cytochrome reductase family.</text>
</comment>
<accession>Q502I6</accession>
<feature type="chain" id="PRO_0000287559" description="Cytochrome b5 reductase 4">
    <location>
        <begin position="1"/>
        <end position="527"/>
    </location>
</feature>
<feature type="domain" description="Cytochrome b5 heme-binding" evidence="2">
    <location>
        <begin position="56"/>
        <end position="132"/>
    </location>
</feature>
<feature type="domain" description="CS" evidence="3">
    <location>
        <begin position="173"/>
        <end position="264"/>
    </location>
</feature>
<feature type="domain" description="FAD-binding FR-type" evidence="4">
    <location>
        <begin position="281"/>
        <end position="392"/>
    </location>
</feature>
<feature type="region of interest" description="Disordered" evidence="5">
    <location>
        <begin position="1"/>
        <end position="24"/>
    </location>
</feature>
<feature type="region of interest" description="Disordered" evidence="5">
    <location>
        <begin position="138"/>
        <end position="171"/>
    </location>
</feature>
<feature type="binding site" description="axial binding residue" evidence="2">
    <location>
        <position position="91"/>
    </location>
    <ligand>
        <name>heme</name>
        <dbReference type="ChEBI" id="CHEBI:30413"/>
    </ligand>
    <ligandPart>
        <name>Fe</name>
        <dbReference type="ChEBI" id="CHEBI:18248"/>
    </ligandPart>
</feature>
<feature type="binding site" description="axial binding residue" evidence="2">
    <location>
        <position position="114"/>
    </location>
    <ligand>
        <name>heme</name>
        <dbReference type="ChEBI" id="CHEBI:30413"/>
    </ligand>
    <ligandPart>
        <name>Fe</name>
        <dbReference type="ChEBI" id="CHEBI:18248"/>
    </ligandPart>
</feature>
<feature type="binding site" evidence="1">
    <location>
        <begin position="372"/>
        <end position="387"/>
    </location>
    <ligand>
        <name>FAD</name>
        <dbReference type="ChEBI" id="CHEBI:57692"/>
    </ligand>
</feature>
<feature type="binding site" evidence="1">
    <location>
        <begin position="399"/>
        <end position="431"/>
    </location>
    <ligand>
        <name>FAD</name>
        <dbReference type="ChEBI" id="CHEBI:57692"/>
    </ligand>
</feature>
<protein>
    <recommendedName>
        <fullName>Cytochrome b5 reductase 4</fullName>
        <ecNumber>1.6.2.2</ecNumber>
    </recommendedName>
    <alternativeName>
        <fullName>Flavohemoprotein b5/b5R</fullName>
        <shortName>b5+b5R</shortName>
    </alternativeName>
    <alternativeName>
        <fullName>cb5/cb5R</fullName>
    </alternativeName>
</protein>
<gene>
    <name type="primary">cyb5r4</name>
    <name type="ORF">zgc:112177</name>
</gene>
<sequence>MLNVPSQAFPAAGSQQRVAPAGQSRNKVVLKPGHSLLDWIRLTKSGQDLTGLRGRLIEVTEDELKKHNTKKDCWTCIRGMVYNLSAYMDFHPGGEEELMRAAGIDSTDLFDEVHRWVNYESMLKECLVGRMAVKPSPALQAHTEKTESTHLNGLSAPPSLRPEPLSAPLPAKDHRPRYDWFQTDGTVNIVVYTKRKIPSAGCAVVDLQDDNLRVEMLLGRMSYLLYWRLSSRVQDHVDVQTAHSVGKVQLCLRKSVKEKWTQLGQSLEHHDTFIQCKDRGLFYRECVLLSKTDVTHNTQLLRLQLPRGSRMQVPVGRHVYLKTSVQGTDVVKPYTAVDQMLIPPSQSSAEVGSDIHLMIKVYPDGVLTPHIANLPIGASLSVGGPEGSFTLRVLRDVTHLYMLAAGTGFTPMARLIRLALQDFTVIRKMKLMFFNRQERDILWQSQLDELCTKEERFEVQHVLSEPADSWTGRRGRIDACMLQNFLERPENSKCLVCVCGPAGFTESAVQLVRQLDFSEEELHVFQA</sequence>
<reference key="1">
    <citation type="submission" date="2005-05" db="EMBL/GenBank/DDBJ databases">
        <authorList>
            <consortium name="NIH - Zebrafish Gene Collection (ZGC) project"/>
        </authorList>
    </citation>
    <scope>NUCLEOTIDE SEQUENCE [LARGE SCALE MRNA]</scope>
    <source>
        <tissue>Embryo</tissue>
    </source>
</reference>
<proteinExistence type="evidence at transcript level"/>
<organism>
    <name type="scientific">Danio rerio</name>
    <name type="common">Zebrafish</name>
    <name type="synonym">Brachydanio rerio</name>
    <dbReference type="NCBI Taxonomy" id="7955"/>
    <lineage>
        <taxon>Eukaryota</taxon>
        <taxon>Metazoa</taxon>
        <taxon>Chordata</taxon>
        <taxon>Craniata</taxon>
        <taxon>Vertebrata</taxon>
        <taxon>Euteleostomi</taxon>
        <taxon>Actinopterygii</taxon>
        <taxon>Neopterygii</taxon>
        <taxon>Teleostei</taxon>
        <taxon>Ostariophysi</taxon>
        <taxon>Cypriniformes</taxon>
        <taxon>Danionidae</taxon>
        <taxon>Danioninae</taxon>
        <taxon>Danio</taxon>
    </lineage>
</organism>
<evidence type="ECO:0000250" key="1"/>
<evidence type="ECO:0000255" key="2">
    <source>
        <dbReference type="PROSITE-ProRule" id="PRU00279"/>
    </source>
</evidence>
<evidence type="ECO:0000255" key="3">
    <source>
        <dbReference type="PROSITE-ProRule" id="PRU00547"/>
    </source>
</evidence>
<evidence type="ECO:0000255" key="4">
    <source>
        <dbReference type="PROSITE-ProRule" id="PRU00716"/>
    </source>
</evidence>
<evidence type="ECO:0000256" key="5">
    <source>
        <dbReference type="SAM" id="MobiDB-lite"/>
    </source>
</evidence>
<evidence type="ECO:0000305" key="6"/>